<protein>
    <recommendedName>
        <fullName>Putative cell division cycle ATPase</fullName>
    </recommendedName>
</protein>
<comment type="similarity">
    <text evidence="3">Belongs to the AAA ATPase family.</text>
</comment>
<reference key="1">
    <citation type="journal article" date="2002" name="Nature">
        <title>Genome sequence of the human malaria parasite Plasmodium falciparum.</title>
        <authorList>
            <person name="Gardner M.J."/>
            <person name="Hall N."/>
            <person name="Fung E."/>
            <person name="White O."/>
            <person name="Berriman M."/>
            <person name="Hyman R.W."/>
            <person name="Carlton J.M."/>
            <person name="Pain A."/>
            <person name="Nelson K.E."/>
            <person name="Bowman S."/>
            <person name="Paulsen I.T."/>
            <person name="James K.D."/>
            <person name="Eisen J.A."/>
            <person name="Rutherford K.M."/>
            <person name="Salzberg S.L."/>
            <person name="Craig A."/>
            <person name="Kyes S."/>
            <person name="Chan M.-S."/>
            <person name="Nene V."/>
            <person name="Shallom S.J."/>
            <person name="Suh B."/>
            <person name="Peterson J."/>
            <person name="Angiuoli S."/>
            <person name="Pertea M."/>
            <person name="Allen J."/>
            <person name="Selengut J."/>
            <person name="Haft D."/>
            <person name="Mather M.W."/>
            <person name="Vaidya A.B."/>
            <person name="Martin D.M.A."/>
            <person name="Fairlamb A.H."/>
            <person name="Fraunholz M.J."/>
            <person name="Roos D.S."/>
            <person name="Ralph S.A."/>
            <person name="McFadden G.I."/>
            <person name="Cummings L.M."/>
            <person name="Subramanian G.M."/>
            <person name="Mungall C."/>
            <person name="Venter J.C."/>
            <person name="Carucci D.J."/>
            <person name="Hoffman S.L."/>
            <person name="Newbold C."/>
            <person name="Davis R.W."/>
            <person name="Fraser C.M."/>
            <person name="Barrell B.G."/>
        </authorList>
    </citation>
    <scope>NUCLEOTIDE SEQUENCE [LARGE SCALE GENOMIC DNA]</scope>
    <source>
        <strain>3D7</strain>
    </source>
</reference>
<reference key="2">
    <citation type="journal article" date="2002" name="Nature">
        <title>Sequence of Plasmodium falciparum chromosomes 1, 3-9 and 13.</title>
        <authorList>
            <person name="Hall N."/>
            <person name="Pain A."/>
            <person name="Berriman M."/>
            <person name="Churcher C.M."/>
            <person name="Harris B."/>
            <person name="Harris D."/>
            <person name="Mungall K.L."/>
            <person name="Bowman S."/>
            <person name="Atkin R."/>
            <person name="Baker S."/>
            <person name="Barron A."/>
            <person name="Brooks K."/>
            <person name="Buckee C.O."/>
            <person name="Burrows C."/>
            <person name="Cherevach I."/>
            <person name="Chillingworth C."/>
            <person name="Chillingworth T."/>
            <person name="Christodoulou Z."/>
            <person name="Clark L."/>
            <person name="Clark R."/>
            <person name="Corton C."/>
            <person name="Cronin A."/>
            <person name="Davies R.M."/>
            <person name="Davis P."/>
            <person name="Dear P."/>
            <person name="Dearden F."/>
            <person name="Doggett J."/>
            <person name="Feltwell T."/>
            <person name="Goble A."/>
            <person name="Goodhead I."/>
            <person name="Gwilliam R."/>
            <person name="Hamlin N."/>
            <person name="Hance Z."/>
            <person name="Harper D."/>
            <person name="Hauser H."/>
            <person name="Hornsby T."/>
            <person name="Holroyd S."/>
            <person name="Horrocks P."/>
            <person name="Humphray S."/>
            <person name="Jagels K."/>
            <person name="James K.D."/>
            <person name="Johnson D."/>
            <person name="Kerhornou A."/>
            <person name="Knights A."/>
            <person name="Konfortov B."/>
            <person name="Kyes S."/>
            <person name="Larke N."/>
            <person name="Lawson D."/>
            <person name="Lennard N."/>
            <person name="Line A."/>
            <person name="Maddison M."/>
            <person name="Mclean J."/>
            <person name="Mooney P."/>
            <person name="Moule S."/>
            <person name="Murphy L."/>
            <person name="Oliver K."/>
            <person name="Ormond D."/>
            <person name="Price C."/>
            <person name="Quail M.A."/>
            <person name="Rabbinowitsch E."/>
            <person name="Rajandream M.A."/>
            <person name="Rutter S."/>
            <person name="Rutherford K.M."/>
            <person name="Sanders M."/>
            <person name="Simmonds M."/>
            <person name="Seeger K."/>
            <person name="Sharp S."/>
            <person name="Smith R."/>
            <person name="Squares R."/>
            <person name="Squares S."/>
            <person name="Stevens K."/>
            <person name="Taylor K."/>
            <person name="Tivey A."/>
            <person name="Unwin L."/>
            <person name="Whitehead S."/>
            <person name="Woodward J.R."/>
            <person name="Sulston J.E."/>
            <person name="Craig A."/>
            <person name="Newbold C."/>
            <person name="Barrell B.G."/>
        </authorList>
    </citation>
    <scope>NUCLEOTIDE SEQUENCE [LARGE SCALE GENOMIC DNA]</scope>
    <source>
        <strain>3D7</strain>
    </source>
</reference>
<reference key="3">
    <citation type="submission" date="1992-11" db="EMBL/GenBank/DDBJ databases">
        <title>Identification of a Plasmodium falciparum gene encoding a putative cell division cycle component.</title>
        <authorList>
            <person name="Sims P.F.G."/>
            <person name="Hyde J.E."/>
        </authorList>
    </citation>
    <scope>NUCLEOTIDE SEQUENCE [GENOMIC DNA] OF 379-1087</scope>
</reference>
<evidence type="ECO:0000255" key="1"/>
<evidence type="ECO:0000256" key="2">
    <source>
        <dbReference type="SAM" id="MobiDB-lite"/>
    </source>
</evidence>
<evidence type="ECO:0000305" key="3"/>
<dbReference type="EMBL" id="AL844506">
    <property type="protein sequence ID" value="CAD50861.1"/>
    <property type="molecule type" value="Genomic_DNA"/>
</dbReference>
<dbReference type="EMBL" id="M96757">
    <property type="protein sequence ID" value="AAA29520.1"/>
    <property type="molecule type" value="Genomic_DNA"/>
</dbReference>
<dbReference type="RefSeq" id="XP_001349023.1">
    <property type="nucleotide sequence ID" value="XM_001348987.1"/>
</dbReference>
<dbReference type="SMR" id="P46468"/>
<dbReference type="BioGRID" id="1209952">
    <property type="interactions" value="1"/>
</dbReference>
<dbReference type="IntAct" id="P46468">
    <property type="interactions" value="1"/>
</dbReference>
<dbReference type="STRING" id="36329.P46468"/>
<dbReference type="TCDB" id="3.A.25.2.1">
    <property type="family name" value="the symbiont-specific erad-like machinery (selma) family"/>
</dbReference>
<dbReference type="SwissPalm" id="P46468"/>
<dbReference type="PaxDb" id="5833-PF07_0047"/>
<dbReference type="EnsemblProtists" id="CAD50861">
    <property type="protein sequence ID" value="CAD50861"/>
    <property type="gene ID" value="PF3D7_0711000"/>
</dbReference>
<dbReference type="KEGG" id="pfa:PF3D7_0711000"/>
<dbReference type="VEuPathDB" id="PlasmoDB:PF3D7_0711000"/>
<dbReference type="HOGENOM" id="CLU_000688_12_3_1"/>
<dbReference type="InParanoid" id="P46468"/>
<dbReference type="OrthoDB" id="370103at2759"/>
<dbReference type="PhylomeDB" id="P46468"/>
<dbReference type="Proteomes" id="UP000001450">
    <property type="component" value="Chromosome 7"/>
</dbReference>
<dbReference type="GO" id="GO:0020011">
    <property type="term" value="C:apicoplast"/>
    <property type="evidence" value="ECO:0000314"/>
    <property type="project" value="GeneDB"/>
</dbReference>
<dbReference type="GO" id="GO:0005829">
    <property type="term" value="C:cytosol"/>
    <property type="evidence" value="ECO:0000318"/>
    <property type="project" value="GO_Central"/>
</dbReference>
<dbReference type="GO" id="GO:0005634">
    <property type="term" value="C:nucleus"/>
    <property type="evidence" value="ECO:0000318"/>
    <property type="project" value="GO_Central"/>
</dbReference>
<dbReference type="GO" id="GO:0034098">
    <property type="term" value="C:VCP-NPL4-UFD1 AAA ATPase complex"/>
    <property type="evidence" value="ECO:0000318"/>
    <property type="project" value="GO_Central"/>
</dbReference>
<dbReference type="GO" id="GO:0005524">
    <property type="term" value="F:ATP binding"/>
    <property type="evidence" value="ECO:0007669"/>
    <property type="project" value="UniProtKB-KW"/>
</dbReference>
<dbReference type="GO" id="GO:0016887">
    <property type="term" value="F:ATP hydrolysis activity"/>
    <property type="evidence" value="ECO:0000318"/>
    <property type="project" value="GO_Central"/>
</dbReference>
<dbReference type="GO" id="GO:0031593">
    <property type="term" value="F:polyubiquitin modification-dependent protein binding"/>
    <property type="evidence" value="ECO:0000318"/>
    <property type="project" value="GO_Central"/>
</dbReference>
<dbReference type="GO" id="GO:0043130">
    <property type="term" value="F:ubiquitin binding"/>
    <property type="evidence" value="ECO:0000304"/>
    <property type="project" value="GeneDB"/>
</dbReference>
<dbReference type="GO" id="GO:0097352">
    <property type="term" value="P:autophagosome maturation"/>
    <property type="evidence" value="ECO:0000318"/>
    <property type="project" value="GO_Central"/>
</dbReference>
<dbReference type="GO" id="GO:0051228">
    <property type="term" value="P:mitotic spindle disassembly"/>
    <property type="evidence" value="ECO:0000318"/>
    <property type="project" value="GO_Central"/>
</dbReference>
<dbReference type="GO" id="GO:0043161">
    <property type="term" value="P:proteasome-mediated ubiquitin-dependent protein catabolic process"/>
    <property type="evidence" value="ECO:0000318"/>
    <property type="project" value="GO_Central"/>
</dbReference>
<dbReference type="GO" id="GO:0010564">
    <property type="term" value="P:regulation of cell cycle process"/>
    <property type="evidence" value="ECO:0000314"/>
    <property type="project" value="GeneDB"/>
</dbReference>
<dbReference type="GO" id="GO:0030970">
    <property type="term" value="P:retrograde protein transport, ER to cytosol"/>
    <property type="evidence" value="ECO:0000318"/>
    <property type="project" value="GO_Central"/>
</dbReference>
<dbReference type="CDD" id="cd19519">
    <property type="entry name" value="RecA-like_CDC48_r1-like"/>
    <property type="match status" value="1"/>
</dbReference>
<dbReference type="FunFam" id="3.40.50.300:FF:000018">
    <property type="entry name" value="Cell division control 48"/>
    <property type="match status" value="1"/>
</dbReference>
<dbReference type="FunFam" id="3.40.50.300:FF:000012">
    <property type="entry name" value="Transitional endoplasmic reticulum ATPase"/>
    <property type="match status" value="1"/>
</dbReference>
<dbReference type="Gene3D" id="1.10.8.60">
    <property type="match status" value="2"/>
</dbReference>
<dbReference type="Gene3D" id="2.40.40.20">
    <property type="match status" value="1"/>
</dbReference>
<dbReference type="Gene3D" id="3.10.330.10">
    <property type="match status" value="1"/>
</dbReference>
<dbReference type="Gene3D" id="3.40.50.300">
    <property type="entry name" value="P-loop containing nucleotide triphosphate hydrolases"/>
    <property type="match status" value="2"/>
</dbReference>
<dbReference type="InterPro" id="IPR003593">
    <property type="entry name" value="AAA+_ATPase"/>
</dbReference>
<dbReference type="InterPro" id="IPR050168">
    <property type="entry name" value="AAA_ATPase_domain"/>
</dbReference>
<dbReference type="InterPro" id="IPR041569">
    <property type="entry name" value="AAA_lid_3"/>
</dbReference>
<dbReference type="InterPro" id="IPR009010">
    <property type="entry name" value="Asp_de-COase-like_dom_sf"/>
</dbReference>
<dbReference type="InterPro" id="IPR003959">
    <property type="entry name" value="ATPase_AAA_core"/>
</dbReference>
<dbReference type="InterPro" id="IPR003960">
    <property type="entry name" value="ATPase_AAA_CS"/>
</dbReference>
<dbReference type="InterPro" id="IPR029067">
    <property type="entry name" value="CDC48_domain_2-like_sf"/>
</dbReference>
<dbReference type="InterPro" id="IPR003338">
    <property type="entry name" value="CDC4_N-term_subdom"/>
</dbReference>
<dbReference type="InterPro" id="IPR027417">
    <property type="entry name" value="P-loop_NTPase"/>
</dbReference>
<dbReference type="PANTHER" id="PTHR23077">
    <property type="entry name" value="AAA-FAMILY ATPASE"/>
    <property type="match status" value="1"/>
</dbReference>
<dbReference type="PANTHER" id="PTHR23077:SF171">
    <property type="entry name" value="NUCLEAR VALOSIN-CONTAINING PROTEIN-LIKE"/>
    <property type="match status" value="1"/>
</dbReference>
<dbReference type="Pfam" id="PF00004">
    <property type="entry name" value="AAA"/>
    <property type="match status" value="2"/>
</dbReference>
<dbReference type="Pfam" id="PF17862">
    <property type="entry name" value="AAA_lid_3"/>
    <property type="match status" value="2"/>
</dbReference>
<dbReference type="SMART" id="SM00382">
    <property type="entry name" value="AAA"/>
    <property type="match status" value="2"/>
</dbReference>
<dbReference type="SMART" id="SM01073">
    <property type="entry name" value="CDC48_N"/>
    <property type="match status" value="1"/>
</dbReference>
<dbReference type="SUPFAM" id="SSF50692">
    <property type="entry name" value="ADC-like"/>
    <property type="match status" value="1"/>
</dbReference>
<dbReference type="SUPFAM" id="SSF54585">
    <property type="entry name" value="Cdc48 domain 2-like"/>
    <property type="match status" value="1"/>
</dbReference>
<dbReference type="SUPFAM" id="SSF52540">
    <property type="entry name" value="P-loop containing nucleoside triphosphate hydrolases"/>
    <property type="match status" value="2"/>
</dbReference>
<dbReference type="PROSITE" id="PS00674">
    <property type="entry name" value="AAA"/>
    <property type="match status" value="2"/>
</dbReference>
<keyword id="KW-0067">ATP-binding</keyword>
<keyword id="KW-0131">Cell cycle</keyword>
<keyword id="KW-0547">Nucleotide-binding</keyword>
<keyword id="KW-1185">Reference proteome</keyword>
<keyword id="KW-0677">Repeat</keyword>
<name>CDAT_PLAF7</name>
<feature type="chain" id="PRO_0000084593" description="Putative cell division cycle ATPase">
    <location>
        <begin position="1"/>
        <end position="1229"/>
    </location>
</feature>
<feature type="region of interest" description="Disordered" evidence="2">
    <location>
        <begin position="252"/>
        <end position="315"/>
    </location>
</feature>
<feature type="region of interest" description="Disordered" evidence="2">
    <location>
        <begin position="814"/>
        <end position="837"/>
    </location>
</feature>
<feature type="region of interest" description="Disordered" evidence="2">
    <location>
        <begin position="860"/>
        <end position="892"/>
    </location>
</feature>
<feature type="compositionally biased region" description="Low complexity" evidence="2">
    <location>
        <begin position="252"/>
        <end position="267"/>
    </location>
</feature>
<feature type="compositionally biased region" description="Basic and acidic residues" evidence="2">
    <location>
        <begin position="268"/>
        <end position="281"/>
    </location>
</feature>
<feature type="compositionally biased region" description="Low complexity" evidence="2">
    <location>
        <begin position="282"/>
        <end position="314"/>
    </location>
</feature>
<feature type="compositionally biased region" description="Basic and acidic residues" evidence="2">
    <location>
        <begin position="819"/>
        <end position="837"/>
    </location>
</feature>
<feature type="compositionally biased region" description="Basic and acidic residues" evidence="2">
    <location>
        <begin position="882"/>
        <end position="892"/>
    </location>
</feature>
<feature type="binding site" evidence="1">
    <location>
        <begin position="568"/>
        <end position="575"/>
    </location>
    <ligand>
        <name>ATP</name>
        <dbReference type="ChEBI" id="CHEBI:30616"/>
    </ligand>
</feature>
<feature type="binding site" evidence="1">
    <location>
        <begin position="975"/>
        <end position="982"/>
    </location>
    <ligand>
        <name>ATP</name>
        <dbReference type="ChEBI" id="CHEBI:30616"/>
    </ligand>
</feature>
<feature type="sequence conflict" description="In Ref. 3; AAA29520." evidence="3" ref="3">
    <original>D</original>
    <variation>N</variation>
    <location>
        <position position="834"/>
    </location>
</feature>
<proteinExistence type="inferred from homology"/>
<sequence length="1229" mass="142080">MKVRKMHYPLFSFTEYLSCYIILYFFVFLPNYSYAININNYHNKNNLWNINNKWNNQQSNHFSNNRIGHFLWGSKIRKNPLASISTSITTKKLENQKKKTNKNESYSNVNDKYEHNNNTAHFVQINYKNDQSNDTLSTYKNNNEMTVEGKPNNLASGEGKKEIHNTTQKILEKVDYFKEREKITNSYNNNNNNNKVIVTHDNKNHTNYINKVENKQSDDKIKNLNNKYIKKFKSHILQNDILGTISTMFWSGKKNNNGNVKKGIKNVPMDEKSYSPNDHDNNSNNSNNNNNNDNNNSNNNNNNNNGGKNNSYYNEKTQKGVNDKETNFLLKALDSGKFPTYCLVENIDENLDNFDIYMSKEKMDELNINDGATVLLKGKKKREMLGIARLDRSLKKHYVVISFAMKKNLRLMHNDIIKIHPFMNAKRIRNVVLSPFSDTIPNLSREELEKAVIHPYLKNSYKPLRVNSNIYIYYKNNKIEFKVLKIISEESENEEFGCIGEHSQLTLAEEYLKREDYEENNDDITYEDLGGMKKQLNKIRELIELPLKYPEIFMSIGISAPKGVLMHGIPGTGKTSIAKAIANESNAYCYIINGPEIMSKHIGESEQKLRKIFKKASEKTPCIIFIDEIDSIANKRSKSNNELEKRVVSQLLTLMDGLKKNNNVLVLAATNRPNSIDPALRRFGRFDREIEIPVPDEQGRYEILLTKTKKMKLDPDVNLRKIAKECHGYVGADLAQLCFEAAIQCIKEHIHFLDLDEEDFIEFMKISVDEDKKNMGNEPYGSSHTNNSNYINHLTESSNKLSYTNMFPLNRKNTLLQNDKNEMNKDSSYDKKTDALDNYKNDSTIDMEKKKNKKKSNFFFSNDDEETKNKNKTNVNQKKKKNPNDKLDKNERRIPAYILNKLTIKAKHFQHALNICNPSSLRERQVQIPTVTWNDIGGMNEVKEQLKETILYPLEYKHLYNKFNSNYNKGILLYGPPGCGKTLLAKAIANECKANFISVKGPELLTMWFGESEANVRDLFDKARAASPCIIFFDEIDSLAKERNSNTNNDASDRVINQILTEIDGINEKKTIFIIAATNRPDILDKALTRPGRLDKLIYISLPDLKSRYSIFKAILKNTPLNEDVDIHDMAKRTEGFSGADITNLCQSAVNEAIKETIHLLNIRKKEQEEQRKKNKNSFKIDDTDTYDPVPTLSKKHFDLAFKNARISIQPEDVLKYEKFKEKLSLQDF</sequence>
<organism>
    <name type="scientific">Plasmodium falciparum (isolate 3D7)</name>
    <dbReference type="NCBI Taxonomy" id="36329"/>
    <lineage>
        <taxon>Eukaryota</taxon>
        <taxon>Sar</taxon>
        <taxon>Alveolata</taxon>
        <taxon>Apicomplexa</taxon>
        <taxon>Aconoidasida</taxon>
        <taxon>Haemosporida</taxon>
        <taxon>Plasmodiidae</taxon>
        <taxon>Plasmodium</taxon>
        <taxon>Plasmodium (Laverania)</taxon>
    </lineage>
</organism>
<accession>P46468</accession>
<accession>Q8IBY0</accession>
<gene>
    <name type="ORF">PF07_0047</name>
</gene>